<evidence type="ECO:0000255" key="1">
    <source>
        <dbReference type="HAMAP-Rule" id="MF_01042"/>
    </source>
</evidence>
<accession>A9KTV9</accession>
<sequence>MNKDDDKEGLAMFSALIDGIKPITQNKRHFRTPLKTKQEIELKEQQLHANSYFSDTYQPLLPVQGPMRWLEEGIDSLELKRLRRGDYQPDLLLDLHGYRQSEAKLELAALIQACVKQQSLCCCIMHGYGSGILKQQVPMWLVQHPMVKAFHQAPKEWGGDAALLVLIDIGEQPHRR</sequence>
<feature type="chain" id="PRO_1000084360" description="Ribosome rescue factor SmrB">
    <location>
        <begin position="1"/>
        <end position="176"/>
    </location>
</feature>
<feature type="domain" description="Smr" evidence="1">
    <location>
        <begin position="93"/>
        <end position="168"/>
    </location>
</feature>
<reference key="1">
    <citation type="submission" date="2007-11" db="EMBL/GenBank/DDBJ databases">
        <title>Complete sequence of chromosome of Shewanella baltica OS195.</title>
        <authorList>
            <consortium name="US DOE Joint Genome Institute"/>
            <person name="Copeland A."/>
            <person name="Lucas S."/>
            <person name="Lapidus A."/>
            <person name="Barry K."/>
            <person name="Glavina del Rio T."/>
            <person name="Dalin E."/>
            <person name="Tice H."/>
            <person name="Pitluck S."/>
            <person name="Chain P."/>
            <person name="Malfatti S."/>
            <person name="Shin M."/>
            <person name="Vergez L."/>
            <person name="Schmutz J."/>
            <person name="Larimer F."/>
            <person name="Land M."/>
            <person name="Hauser L."/>
            <person name="Kyrpides N."/>
            <person name="Kim E."/>
            <person name="Brettar I."/>
            <person name="Rodrigues J."/>
            <person name="Konstantinidis K."/>
            <person name="Klappenbach J."/>
            <person name="Hofle M."/>
            <person name="Tiedje J."/>
            <person name="Richardson P."/>
        </authorList>
    </citation>
    <scope>NUCLEOTIDE SEQUENCE [LARGE SCALE GENOMIC DNA]</scope>
    <source>
        <strain>OS195</strain>
    </source>
</reference>
<keyword id="KW-0255">Endonuclease</keyword>
<keyword id="KW-0378">Hydrolase</keyword>
<keyword id="KW-0540">Nuclease</keyword>
<keyword id="KW-0694">RNA-binding</keyword>
<keyword id="KW-0699">rRNA-binding</keyword>
<protein>
    <recommendedName>
        <fullName evidence="1">Ribosome rescue factor SmrB</fullName>
        <ecNumber evidence="1">3.1.-.-</ecNumber>
    </recommendedName>
</protein>
<proteinExistence type="inferred from homology"/>
<organism>
    <name type="scientific">Shewanella baltica (strain OS195)</name>
    <dbReference type="NCBI Taxonomy" id="399599"/>
    <lineage>
        <taxon>Bacteria</taxon>
        <taxon>Pseudomonadati</taxon>
        <taxon>Pseudomonadota</taxon>
        <taxon>Gammaproteobacteria</taxon>
        <taxon>Alteromonadales</taxon>
        <taxon>Shewanellaceae</taxon>
        <taxon>Shewanella</taxon>
    </lineage>
</organism>
<gene>
    <name evidence="1" type="primary">smrB</name>
    <name type="ordered locus">Sbal195_2848</name>
</gene>
<name>SMRB_SHEB9</name>
<dbReference type="EC" id="3.1.-.-" evidence="1"/>
<dbReference type="EMBL" id="CP000891">
    <property type="protein sequence ID" value="ABX50014.1"/>
    <property type="molecule type" value="Genomic_DNA"/>
</dbReference>
<dbReference type="RefSeq" id="WP_006085471.1">
    <property type="nucleotide sequence ID" value="NC_009997.1"/>
</dbReference>
<dbReference type="SMR" id="A9KTV9"/>
<dbReference type="GeneID" id="11772934"/>
<dbReference type="KEGG" id="sbn:Sbal195_2848"/>
<dbReference type="HOGENOM" id="CLU_055978_4_0_6"/>
<dbReference type="Proteomes" id="UP000000770">
    <property type="component" value="Chromosome"/>
</dbReference>
<dbReference type="GO" id="GO:0004521">
    <property type="term" value="F:RNA endonuclease activity"/>
    <property type="evidence" value="ECO:0007669"/>
    <property type="project" value="UniProtKB-UniRule"/>
</dbReference>
<dbReference type="GO" id="GO:0019843">
    <property type="term" value="F:rRNA binding"/>
    <property type="evidence" value="ECO:0007669"/>
    <property type="project" value="UniProtKB-UniRule"/>
</dbReference>
<dbReference type="GO" id="GO:0072344">
    <property type="term" value="P:rescue of stalled ribosome"/>
    <property type="evidence" value="ECO:0007669"/>
    <property type="project" value="UniProtKB-UniRule"/>
</dbReference>
<dbReference type="Gene3D" id="3.30.1370.110">
    <property type="match status" value="1"/>
</dbReference>
<dbReference type="HAMAP" id="MF_01042">
    <property type="entry name" value="SmrB"/>
    <property type="match status" value="1"/>
</dbReference>
<dbReference type="InterPro" id="IPR002625">
    <property type="entry name" value="Smr_dom"/>
</dbReference>
<dbReference type="InterPro" id="IPR036063">
    <property type="entry name" value="Smr_dom_sf"/>
</dbReference>
<dbReference type="InterPro" id="IPR022990">
    <property type="entry name" value="SmrB-like"/>
</dbReference>
<dbReference type="NCBIfam" id="NF003432">
    <property type="entry name" value="PRK04946.1"/>
    <property type="match status" value="1"/>
</dbReference>
<dbReference type="PANTHER" id="PTHR35562">
    <property type="entry name" value="DNA ENDONUCLEASE SMRA-RELATED"/>
    <property type="match status" value="1"/>
</dbReference>
<dbReference type="PANTHER" id="PTHR35562:SF1">
    <property type="entry name" value="UPF0115 PROTEIN YFCN"/>
    <property type="match status" value="1"/>
</dbReference>
<dbReference type="Pfam" id="PF01713">
    <property type="entry name" value="Smr"/>
    <property type="match status" value="1"/>
</dbReference>
<dbReference type="SMART" id="SM00463">
    <property type="entry name" value="SMR"/>
    <property type="match status" value="1"/>
</dbReference>
<dbReference type="SUPFAM" id="SSF160443">
    <property type="entry name" value="SMR domain-like"/>
    <property type="match status" value="1"/>
</dbReference>
<dbReference type="PROSITE" id="PS50828">
    <property type="entry name" value="SMR"/>
    <property type="match status" value="1"/>
</dbReference>
<comment type="function">
    <text evidence="1">Acts as a ribosome collision sensor. Detects stalled/collided disomes (pairs of ribosomes where the leading ribosome is stalled and a second ribosome has collided with it) and endonucleolytically cleaves mRNA at the 5' boundary of the stalled ribosome. Stalled/collided disomes form a new interface (primarily via the 30S subunits) that binds SmrB. Cleaved mRNA becomes available for tmRNA ligation, leading to ribosomal subunit dissociation and rescue of stalled ribosomes.</text>
</comment>
<comment type="subunit">
    <text evidence="1">Associates with collided ribosomes, but not with correctly translating polysomes.</text>
</comment>
<comment type="similarity">
    <text evidence="1">Belongs to the SmrB family.</text>
</comment>